<name>DPO3B_LACLA</name>
<gene>
    <name type="primary">dnaN</name>
    <name type="ordered locus">LL0002</name>
    <name type="ORF">L0275</name>
</gene>
<reference key="1">
    <citation type="journal article" date="2001" name="Genome Res.">
        <title>The complete genome sequence of the lactic acid bacterium Lactococcus lactis ssp. lactis IL1403.</title>
        <authorList>
            <person name="Bolotin A."/>
            <person name="Wincker P."/>
            <person name="Mauger S."/>
            <person name="Jaillon O."/>
            <person name="Malarme K."/>
            <person name="Weissenbach J."/>
            <person name="Ehrlich S.D."/>
            <person name="Sorokin A."/>
        </authorList>
    </citation>
    <scope>NUCLEOTIDE SEQUENCE [LARGE SCALE GENOMIC DNA]</scope>
    <source>
        <strain>IL1403</strain>
    </source>
</reference>
<keyword id="KW-0963">Cytoplasm</keyword>
<keyword id="KW-0235">DNA replication</keyword>
<keyword id="KW-0238">DNA-binding</keyword>
<keyword id="KW-0239">DNA-directed DNA polymerase</keyword>
<keyword id="KW-0548">Nucleotidyltransferase</keyword>
<keyword id="KW-1185">Reference proteome</keyword>
<keyword id="KW-0808">Transferase</keyword>
<accession>Q9CJJ1</accession>
<comment type="function">
    <text evidence="1">Confers DNA tethering and processivity to DNA polymerases and other proteins. Acts as a clamp, forming a ring around DNA (a reaction catalyzed by the clamp-loading complex) which diffuses in an ATP-independent manner freely and bidirectionally along dsDNA. Initially characterized for its ability to contact the catalytic subunit of DNA polymerase III (Pol III), a complex, multichain enzyme responsible for most of the replicative synthesis in bacteria; Pol III exhibits 3'-5' exonuclease proofreading activity. The beta chain is required for initiation of replication as well as for processivity of DNA replication.</text>
</comment>
<comment type="subunit">
    <text evidence="1">Forms a ring-shaped head-to-tail homodimer around DNA which binds and tethers DNA polymerases and other proteins to the DNA. The DNA replisome complex has a single clamp-loading complex (3 tau and 1 each of delta, delta', psi and chi subunits) which binds 3 Pol III cores (1 core on the leading strand and 2 on the lagging strand) each with a beta sliding clamp dimer. Additional proteins in the replisome are other copies of gamma, psi and chi, Ssb, DNA helicase and RNA primase.</text>
</comment>
<comment type="subcellular location">
    <subcellularLocation>
        <location evidence="1">Cytoplasm</location>
    </subcellularLocation>
</comment>
<comment type="similarity">
    <text evidence="2">Belongs to the beta sliding clamp family.</text>
</comment>
<organism>
    <name type="scientific">Lactococcus lactis subsp. lactis (strain IL1403)</name>
    <name type="common">Streptococcus lactis</name>
    <dbReference type="NCBI Taxonomy" id="272623"/>
    <lineage>
        <taxon>Bacteria</taxon>
        <taxon>Bacillati</taxon>
        <taxon>Bacillota</taxon>
        <taxon>Bacilli</taxon>
        <taxon>Lactobacillales</taxon>
        <taxon>Streptococcaceae</taxon>
        <taxon>Lactococcus</taxon>
    </lineage>
</organism>
<evidence type="ECO:0000250" key="1">
    <source>
        <dbReference type="UniProtKB" id="P0A988"/>
    </source>
</evidence>
<evidence type="ECO:0000305" key="2"/>
<sequence length="380" mass="42264">MIKFSINKNAFQNALRITKQAIGSKVTIPALTKLKIEVEENGITLIGSNGQISIKNFLPVDNKDASMLISGTGSVLLEAAFFENVVSQLPEVTLEFTEKEQKQVLLTSGKSEITLKGLDSEIYPHLQEISEGSSLKMKVKVLKEIFTETVFAVSTQENRPIFTGVHLETLSTGELKAVATDSHRMSQRLLPLEDSELKFDVILPSKSINSFKNVFTNDEEEIEIFISGSQMLFRNETISYYSRLIEGSYPDTNRLIPNEADYTLDLVFDAAQLRHTMDRARLLTVMTTNGTVKLTVSGDSVVTTANSPEVGSVHEELTALSKEGNDLAISFNPEYLIDALKVIKAPEVRIRFISNVRPFTLQPRNEESGFVQLITPVRTN</sequence>
<proteinExistence type="inferred from homology"/>
<feature type="chain" id="PRO_0000105440" description="Beta sliding clamp">
    <location>
        <begin position="1"/>
        <end position="380"/>
    </location>
</feature>
<protein>
    <recommendedName>
        <fullName>Beta sliding clamp</fullName>
        <shortName>Beta clamp</shortName>
        <shortName>Sliding clamp</shortName>
    </recommendedName>
    <alternativeName>
        <fullName>Beta-clamp processivity factor</fullName>
    </alternativeName>
    <alternativeName>
        <fullName>DNA polymerase III beta sliding clamp subunit</fullName>
    </alternativeName>
    <alternativeName>
        <fullName>DNA polymerase III subunit beta</fullName>
    </alternativeName>
</protein>
<dbReference type="EMBL" id="AE005176">
    <property type="protein sequence ID" value="AAK04100.1"/>
    <property type="molecule type" value="Genomic_DNA"/>
</dbReference>
<dbReference type="PIR" id="B86625">
    <property type="entry name" value="B86625"/>
</dbReference>
<dbReference type="RefSeq" id="NP_266158.1">
    <property type="nucleotide sequence ID" value="NC_002662.1"/>
</dbReference>
<dbReference type="RefSeq" id="WP_003130856.1">
    <property type="nucleotide sequence ID" value="NC_002662.1"/>
</dbReference>
<dbReference type="SMR" id="Q9CJJ1"/>
<dbReference type="PaxDb" id="272623-L0275"/>
<dbReference type="EnsemblBacteria" id="AAK04100">
    <property type="protein sequence ID" value="AAK04100"/>
    <property type="gene ID" value="L0275"/>
</dbReference>
<dbReference type="GeneID" id="89632172"/>
<dbReference type="KEGG" id="lla:L0275"/>
<dbReference type="PATRIC" id="fig|272623.7.peg.2"/>
<dbReference type="eggNOG" id="COG0592">
    <property type="taxonomic scope" value="Bacteria"/>
</dbReference>
<dbReference type="HOGENOM" id="CLU_038149_2_0_9"/>
<dbReference type="OrthoDB" id="8421503at2"/>
<dbReference type="Proteomes" id="UP000002196">
    <property type="component" value="Chromosome"/>
</dbReference>
<dbReference type="GO" id="GO:0005737">
    <property type="term" value="C:cytoplasm"/>
    <property type="evidence" value="ECO:0007669"/>
    <property type="project" value="UniProtKB-SubCell"/>
</dbReference>
<dbReference type="GO" id="GO:0009360">
    <property type="term" value="C:DNA polymerase III complex"/>
    <property type="evidence" value="ECO:0007669"/>
    <property type="project" value="InterPro"/>
</dbReference>
<dbReference type="GO" id="GO:0008408">
    <property type="term" value="F:3'-5' exonuclease activity"/>
    <property type="evidence" value="ECO:0007669"/>
    <property type="project" value="InterPro"/>
</dbReference>
<dbReference type="GO" id="GO:0003677">
    <property type="term" value="F:DNA binding"/>
    <property type="evidence" value="ECO:0007669"/>
    <property type="project" value="UniProtKB-KW"/>
</dbReference>
<dbReference type="GO" id="GO:0003887">
    <property type="term" value="F:DNA-directed DNA polymerase activity"/>
    <property type="evidence" value="ECO:0007669"/>
    <property type="project" value="UniProtKB-KW"/>
</dbReference>
<dbReference type="GO" id="GO:0006271">
    <property type="term" value="P:DNA strand elongation involved in DNA replication"/>
    <property type="evidence" value="ECO:0007669"/>
    <property type="project" value="TreeGrafter"/>
</dbReference>
<dbReference type="CDD" id="cd00140">
    <property type="entry name" value="beta_clamp"/>
    <property type="match status" value="1"/>
</dbReference>
<dbReference type="Gene3D" id="3.70.10.10">
    <property type="match status" value="1"/>
</dbReference>
<dbReference type="Gene3D" id="3.10.150.10">
    <property type="entry name" value="DNA Polymerase III, subunit A, domain 2"/>
    <property type="match status" value="1"/>
</dbReference>
<dbReference type="InterPro" id="IPR046938">
    <property type="entry name" value="DNA_clamp_sf"/>
</dbReference>
<dbReference type="InterPro" id="IPR001001">
    <property type="entry name" value="DNA_polIII_beta"/>
</dbReference>
<dbReference type="InterPro" id="IPR022635">
    <property type="entry name" value="DNA_polIII_beta_C"/>
</dbReference>
<dbReference type="InterPro" id="IPR022637">
    <property type="entry name" value="DNA_polIII_beta_cen"/>
</dbReference>
<dbReference type="InterPro" id="IPR022634">
    <property type="entry name" value="DNA_polIII_beta_N"/>
</dbReference>
<dbReference type="NCBIfam" id="TIGR00663">
    <property type="entry name" value="dnan"/>
    <property type="match status" value="1"/>
</dbReference>
<dbReference type="PANTHER" id="PTHR30478:SF0">
    <property type="entry name" value="BETA SLIDING CLAMP"/>
    <property type="match status" value="1"/>
</dbReference>
<dbReference type="PANTHER" id="PTHR30478">
    <property type="entry name" value="DNA POLYMERASE III SUBUNIT BETA"/>
    <property type="match status" value="1"/>
</dbReference>
<dbReference type="Pfam" id="PF00712">
    <property type="entry name" value="DNA_pol3_beta"/>
    <property type="match status" value="1"/>
</dbReference>
<dbReference type="Pfam" id="PF02767">
    <property type="entry name" value="DNA_pol3_beta_2"/>
    <property type="match status" value="1"/>
</dbReference>
<dbReference type="Pfam" id="PF02768">
    <property type="entry name" value="DNA_pol3_beta_3"/>
    <property type="match status" value="1"/>
</dbReference>
<dbReference type="PIRSF" id="PIRSF000804">
    <property type="entry name" value="DNA_pol_III_b"/>
    <property type="match status" value="1"/>
</dbReference>
<dbReference type="SMART" id="SM00480">
    <property type="entry name" value="POL3Bc"/>
    <property type="match status" value="1"/>
</dbReference>
<dbReference type="SUPFAM" id="SSF55979">
    <property type="entry name" value="DNA clamp"/>
    <property type="match status" value="3"/>
</dbReference>